<sequence length="94" mass="10621">MTKSELIERLATQQSHIPAKAVEDAVKEMLEHMASTLAQGERIEIRGFGSFSLHYRAPRTGRNPKTGDKVELEGKYVPHFKPGKELRDRANIYG</sequence>
<proteinExistence type="inferred from homology"/>
<keyword id="KW-0233">DNA recombination</keyword>
<keyword id="KW-0238">DNA-binding</keyword>
<keyword id="KW-0804">Transcription</keyword>
<keyword id="KW-0805">Transcription regulation</keyword>
<keyword id="KW-0810">Translation regulation</keyword>
<gene>
    <name evidence="1" type="primary">ihfB</name>
    <name evidence="1" type="synonym">himD</name>
    <name type="ordered locus">SeAg_B0988</name>
</gene>
<dbReference type="EMBL" id="CP001138">
    <property type="protein sequence ID" value="ACH49961.1"/>
    <property type="molecule type" value="Genomic_DNA"/>
</dbReference>
<dbReference type="RefSeq" id="WP_000167332.1">
    <property type="nucleotide sequence ID" value="NC_011149.1"/>
</dbReference>
<dbReference type="SMR" id="B5F165"/>
<dbReference type="GeneID" id="84237116"/>
<dbReference type="KEGG" id="sea:SeAg_B0988"/>
<dbReference type="HOGENOM" id="CLU_105066_2_0_6"/>
<dbReference type="Proteomes" id="UP000008819">
    <property type="component" value="Chromosome"/>
</dbReference>
<dbReference type="GO" id="GO:0005694">
    <property type="term" value="C:chromosome"/>
    <property type="evidence" value="ECO:0007669"/>
    <property type="project" value="InterPro"/>
</dbReference>
<dbReference type="GO" id="GO:0005829">
    <property type="term" value="C:cytosol"/>
    <property type="evidence" value="ECO:0007669"/>
    <property type="project" value="TreeGrafter"/>
</dbReference>
<dbReference type="GO" id="GO:0003677">
    <property type="term" value="F:DNA binding"/>
    <property type="evidence" value="ECO:0007669"/>
    <property type="project" value="UniProtKB-UniRule"/>
</dbReference>
<dbReference type="GO" id="GO:0030527">
    <property type="term" value="F:structural constituent of chromatin"/>
    <property type="evidence" value="ECO:0007669"/>
    <property type="project" value="InterPro"/>
</dbReference>
<dbReference type="GO" id="GO:0006310">
    <property type="term" value="P:DNA recombination"/>
    <property type="evidence" value="ECO:0007669"/>
    <property type="project" value="UniProtKB-UniRule"/>
</dbReference>
<dbReference type="GO" id="GO:0006355">
    <property type="term" value="P:regulation of DNA-templated transcription"/>
    <property type="evidence" value="ECO:0007669"/>
    <property type="project" value="UniProtKB-UniRule"/>
</dbReference>
<dbReference type="GO" id="GO:0006417">
    <property type="term" value="P:regulation of translation"/>
    <property type="evidence" value="ECO:0007669"/>
    <property type="project" value="UniProtKB-UniRule"/>
</dbReference>
<dbReference type="CDD" id="cd13836">
    <property type="entry name" value="IHF_B"/>
    <property type="match status" value="1"/>
</dbReference>
<dbReference type="FunFam" id="4.10.520.10:FF:000003">
    <property type="entry name" value="Integration host factor subunit beta"/>
    <property type="match status" value="1"/>
</dbReference>
<dbReference type="Gene3D" id="4.10.520.10">
    <property type="entry name" value="IHF-like DNA-binding proteins"/>
    <property type="match status" value="1"/>
</dbReference>
<dbReference type="HAMAP" id="MF_00381">
    <property type="entry name" value="IHF_beta"/>
    <property type="match status" value="1"/>
</dbReference>
<dbReference type="InterPro" id="IPR000119">
    <property type="entry name" value="Hist_DNA-bd"/>
</dbReference>
<dbReference type="InterPro" id="IPR020816">
    <property type="entry name" value="Histone-like_DNA-bd_CS"/>
</dbReference>
<dbReference type="InterPro" id="IPR010992">
    <property type="entry name" value="IHF-like_DNA-bd_dom_sf"/>
</dbReference>
<dbReference type="InterPro" id="IPR005685">
    <property type="entry name" value="IHF_beta"/>
</dbReference>
<dbReference type="NCBIfam" id="TIGR00988">
    <property type="entry name" value="hip"/>
    <property type="match status" value="1"/>
</dbReference>
<dbReference type="NCBIfam" id="NF001222">
    <property type="entry name" value="PRK00199.1"/>
    <property type="match status" value="1"/>
</dbReference>
<dbReference type="PANTHER" id="PTHR33175">
    <property type="entry name" value="DNA-BINDING PROTEIN HU"/>
    <property type="match status" value="1"/>
</dbReference>
<dbReference type="PANTHER" id="PTHR33175:SF5">
    <property type="entry name" value="INTEGRATION HOST FACTOR SUBUNIT BETA"/>
    <property type="match status" value="1"/>
</dbReference>
<dbReference type="Pfam" id="PF00216">
    <property type="entry name" value="Bac_DNA_binding"/>
    <property type="match status" value="1"/>
</dbReference>
<dbReference type="PRINTS" id="PR01727">
    <property type="entry name" value="DNABINDINGHU"/>
</dbReference>
<dbReference type="SMART" id="SM00411">
    <property type="entry name" value="BHL"/>
    <property type="match status" value="1"/>
</dbReference>
<dbReference type="SUPFAM" id="SSF47729">
    <property type="entry name" value="IHF-like DNA-binding proteins"/>
    <property type="match status" value="1"/>
</dbReference>
<dbReference type="PROSITE" id="PS00045">
    <property type="entry name" value="HISTONE_LIKE"/>
    <property type="match status" value="1"/>
</dbReference>
<name>IHFB_SALA4</name>
<comment type="function">
    <text evidence="1">This protein is one of the two subunits of integration host factor, a specific DNA-binding protein that functions in genetic recombination as well as in transcriptional and translational control.</text>
</comment>
<comment type="subunit">
    <text evidence="1">Heterodimer of an alpha and a beta chain.</text>
</comment>
<comment type="similarity">
    <text evidence="1">Belongs to the bacterial histone-like protein family.</text>
</comment>
<evidence type="ECO:0000255" key="1">
    <source>
        <dbReference type="HAMAP-Rule" id="MF_00381"/>
    </source>
</evidence>
<protein>
    <recommendedName>
        <fullName evidence="1">Integration host factor subunit beta</fullName>
        <shortName evidence="1">IHF-beta</shortName>
    </recommendedName>
</protein>
<organism>
    <name type="scientific">Salmonella agona (strain SL483)</name>
    <dbReference type="NCBI Taxonomy" id="454166"/>
    <lineage>
        <taxon>Bacteria</taxon>
        <taxon>Pseudomonadati</taxon>
        <taxon>Pseudomonadota</taxon>
        <taxon>Gammaproteobacteria</taxon>
        <taxon>Enterobacterales</taxon>
        <taxon>Enterobacteriaceae</taxon>
        <taxon>Salmonella</taxon>
    </lineage>
</organism>
<reference key="1">
    <citation type="journal article" date="2011" name="J. Bacteriol.">
        <title>Comparative genomics of 28 Salmonella enterica isolates: evidence for CRISPR-mediated adaptive sublineage evolution.</title>
        <authorList>
            <person name="Fricke W.F."/>
            <person name="Mammel M.K."/>
            <person name="McDermott P.F."/>
            <person name="Tartera C."/>
            <person name="White D.G."/>
            <person name="Leclerc J.E."/>
            <person name="Ravel J."/>
            <person name="Cebula T.A."/>
        </authorList>
    </citation>
    <scope>NUCLEOTIDE SEQUENCE [LARGE SCALE GENOMIC DNA]</scope>
    <source>
        <strain>SL483</strain>
    </source>
</reference>
<feature type="chain" id="PRO_1000122235" description="Integration host factor subunit beta">
    <location>
        <begin position="1"/>
        <end position="94"/>
    </location>
</feature>
<accession>B5F165</accession>